<evidence type="ECO:0000250" key="1"/>
<evidence type="ECO:0000255" key="2">
    <source>
        <dbReference type="HAMAP-Rule" id="MF_01344"/>
    </source>
</evidence>
<keyword id="KW-0150">Chloroplast</keyword>
<keyword id="KW-0249">Electron transport</keyword>
<keyword id="KW-0472">Membrane</keyword>
<keyword id="KW-0602">Photosynthesis</keyword>
<keyword id="KW-0934">Plastid</keyword>
<keyword id="KW-1185">Reference proteome</keyword>
<keyword id="KW-0793">Thylakoid</keyword>
<keyword id="KW-0812">Transmembrane</keyword>
<keyword id="KW-1133">Transmembrane helix</keyword>
<keyword id="KW-0813">Transport</keyword>
<protein>
    <recommendedName>
        <fullName evidence="2">Cytochrome b6-f complex subunit 4</fullName>
    </recommendedName>
    <alternativeName>
        <fullName evidence="2">17 kDa polypeptide</fullName>
    </alternativeName>
</protein>
<name>PETD_VITVI</name>
<geneLocation type="chloroplast"/>
<reference key="1">
    <citation type="journal article" date="2006" name="BMC Evol. Biol.">
        <title>Phylogenetic analyses of Vitis (Vitaceae) based on complete chloroplast genome sequences: effects of taxon sampling and phylogenetic methods on resolving relationships among rosids.</title>
        <authorList>
            <person name="Jansen R.K."/>
            <person name="Kaittanis C."/>
            <person name="Lee S.-B."/>
            <person name="Saski C."/>
            <person name="Tomkins J."/>
            <person name="Alverson A.J."/>
            <person name="Daniell H."/>
        </authorList>
    </citation>
    <scope>NUCLEOTIDE SEQUENCE [LARGE SCALE GENOMIC DNA]</scope>
    <source>
        <strain>cv. Maxxa</strain>
    </source>
</reference>
<organism>
    <name type="scientific">Vitis vinifera</name>
    <name type="common">Grape</name>
    <dbReference type="NCBI Taxonomy" id="29760"/>
    <lineage>
        <taxon>Eukaryota</taxon>
        <taxon>Viridiplantae</taxon>
        <taxon>Streptophyta</taxon>
        <taxon>Embryophyta</taxon>
        <taxon>Tracheophyta</taxon>
        <taxon>Spermatophyta</taxon>
        <taxon>Magnoliopsida</taxon>
        <taxon>eudicotyledons</taxon>
        <taxon>Gunneridae</taxon>
        <taxon>Pentapetalae</taxon>
        <taxon>rosids</taxon>
        <taxon>Vitales</taxon>
        <taxon>Vitaceae</taxon>
        <taxon>Viteae</taxon>
        <taxon>Vitis</taxon>
    </lineage>
</organism>
<gene>
    <name evidence="2" type="primary">petD</name>
</gene>
<dbReference type="EMBL" id="DQ424856">
    <property type="protein sequence ID" value="ABE47564.1"/>
    <property type="molecule type" value="Genomic_DNA"/>
</dbReference>
<dbReference type="RefSeq" id="YP_567108.1">
    <property type="nucleotide sequence ID" value="NC_007957.1"/>
</dbReference>
<dbReference type="SMR" id="Q0ZIY8"/>
<dbReference type="FunCoup" id="Q0ZIY8">
    <property type="interactions" value="302"/>
</dbReference>
<dbReference type="STRING" id="29760.Q0ZIY8"/>
<dbReference type="GeneID" id="4025130"/>
<dbReference type="KEGG" id="vvi:4025130"/>
<dbReference type="InParanoid" id="Q0ZIY8"/>
<dbReference type="OrthoDB" id="829673at71240"/>
<dbReference type="Proteomes" id="UP000009183">
    <property type="component" value="Chloroplast"/>
</dbReference>
<dbReference type="GO" id="GO:0009535">
    <property type="term" value="C:chloroplast thylakoid membrane"/>
    <property type="evidence" value="ECO:0007669"/>
    <property type="project" value="UniProtKB-SubCell"/>
</dbReference>
<dbReference type="GO" id="GO:0045158">
    <property type="term" value="F:electron transporter, transferring electrons within cytochrome b6/f complex of photosystem II activity"/>
    <property type="evidence" value="ECO:0007669"/>
    <property type="project" value="UniProtKB-UniRule"/>
</dbReference>
<dbReference type="GO" id="GO:0045156">
    <property type="term" value="F:electron transporter, transferring electrons within the cyclic electron transport pathway of photosynthesis activity"/>
    <property type="evidence" value="ECO:0007669"/>
    <property type="project" value="InterPro"/>
</dbReference>
<dbReference type="GO" id="GO:0016491">
    <property type="term" value="F:oxidoreductase activity"/>
    <property type="evidence" value="ECO:0007669"/>
    <property type="project" value="InterPro"/>
</dbReference>
<dbReference type="GO" id="GO:0009767">
    <property type="term" value="P:photosynthetic electron transport chain"/>
    <property type="evidence" value="ECO:0007669"/>
    <property type="project" value="InterPro"/>
</dbReference>
<dbReference type="CDD" id="cd00290">
    <property type="entry name" value="cytochrome_b_C"/>
    <property type="match status" value="1"/>
</dbReference>
<dbReference type="FunFam" id="1.10.287.980:FF:000001">
    <property type="entry name" value="Cytochrome b6-f complex subunit 4"/>
    <property type="match status" value="1"/>
</dbReference>
<dbReference type="FunFam" id="1.20.5.510:FF:000002">
    <property type="entry name" value="Cytochrome b6-f complex subunit 4"/>
    <property type="match status" value="1"/>
</dbReference>
<dbReference type="Gene3D" id="1.10.287.980">
    <property type="entry name" value="plastocyanin oxidoreductase"/>
    <property type="match status" value="1"/>
</dbReference>
<dbReference type="Gene3D" id="1.20.5.510">
    <property type="entry name" value="Single helix bin"/>
    <property type="match status" value="1"/>
</dbReference>
<dbReference type="HAMAP" id="MF_01344">
    <property type="entry name" value="Cytb6_f_subIV"/>
    <property type="match status" value="1"/>
</dbReference>
<dbReference type="InterPro" id="IPR005798">
    <property type="entry name" value="Cyt_b/b6_C"/>
</dbReference>
<dbReference type="InterPro" id="IPR036150">
    <property type="entry name" value="Cyt_b/b6_C_sf"/>
</dbReference>
<dbReference type="InterPro" id="IPR005870">
    <property type="entry name" value="Cyt_b6/f_cplx_suIV"/>
</dbReference>
<dbReference type="InterPro" id="IPR048260">
    <property type="entry name" value="Cytochrome_b_C_euk/bac"/>
</dbReference>
<dbReference type="NCBIfam" id="TIGR01156">
    <property type="entry name" value="cytb6_f_IV"/>
    <property type="match status" value="1"/>
</dbReference>
<dbReference type="PANTHER" id="PTHR19271">
    <property type="entry name" value="CYTOCHROME B"/>
    <property type="match status" value="1"/>
</dbReference>
<dbReference type="PANTHER" id="PTHR19271:SF16">
    <property type="entry name" value="CYTOCHROME B"/>
    <property type="match status" value="1"/>
</dbReference>
<dbReference type="Pfam" id="PF00032">
    <property type="entry name" value="Cytochrom_B_C"/>
    <property type="match status" value="1"/>
</dbReference>
<dbReference type="PIRSF" id="PIRSF000033">
    <property type="entry name" value="B6f_17K"/>
    <property type="match status" value="1"/>
</dbReference>
<dbReference type="SUPFAM" id="SSF81648">
    <property type="entry name" value="a domain/subunit of cytochrome bc1 complex (Ubiquinol-cytochrome c reductase)"/>
    <property type="match status" value="1"/>
</dbReference>
<dbReference type="PROSITE" id="PS51003">
    <property type="entry name" value="CYTB_CTER"/>
    <property type="match status" value="1"/>
</dbReference>
<comment type="function">
    <text evidence="2">Component of the cytochrome b6-f complex, which mediates electron transfer between photosystem II (PSII) and photosystem I (PSI), cyclic electron flow around PSI, and state transitions.</text>
</comment>
<comment type="subunit">
    <text evidence="1">The 4 large subunits of the cytochrome b6-f complex are cytochrome b6, subunit IV (17 kDa polypeptide, petD), cytochrome f and the Rieske protein, while the 4 small subunits are petG, petL, petM and petN. The complex functions as a dimer (By similarity).</text>
</comment>
<comment type="subcellular location">
    <subcellularLocation>
        <location evidence="2">Plastid</location>
        <location evidence="2">Chloroplast thylakoid membrane</location>
        <topology evidence="2">Multi-pass membrane protein</topology>
    </subcellularLocation>
</comment>
<comment type="similarity">
    <text evidence="2">Belongs to the cytochrome b family. PetD subfamily.</text>
</comment>
<proteinExistence type="inferred from homology"/>
<sequence>MGVTKKPDLNDPVLRAKLAKGMGHNYYGEPAWPNDLLYIFPVVILGTIACNVGLAVLEPSMIGEPADPFATPLEILPEWYFFPVFQILRTVPNKLLGVLLMVSVPAGLLTVPFLENVNKFQNPFRRPVATTVFLIGTAVALWLGIGATLPIDKSLTLGLF</sequence>
<accession>Q0ZIY8</accession>
<feature type="chain" id="PRO_0000255574" description="Cytochrome b6-f complex subunit 4">
    <location>
        <begin position="1"/>
        <end position="160"/>
    </location>
</feature>
<feature type="transmembrane region" description="Helical" evidence="2">
    <location>
        <begin position="36"/>
        <end position="56"/>
    </location>
</feature>
<feature type="transmembrane region" description="Helical" evidence="2">
    <location>
        <begin position="95"/>
        <end position="115"/>
    </location>
</feature>
<feature type="transmembrane region" description="Helical" evidence="2">
    <location>
        <begin position="131"/>
        <end position="151"/>
    </location>
</feature>